<feature type="chain" id="PRO_0000135866" description="Histidinol dehydrogenase homolog">
    <location>
        <begin position="1"/>
        <end position="409"/>
    </location>
</feature>
<dbReference type="EC" id="1.1.-.-" evidence="1"/>
<dbReference type="EMBL" id="BA000022">
    <property type="protein sequence ID" value="BAA16963.1"/>
    <property type="molecule type" value="Genomic_DNA"/>
</dbReference>
<dbReference type="PIR" id="S74923">
    <property type="entry name" value="S74923"/>
</dbReference>
<dbReference type="SMR" id="P72946"/>
<dbReference type="STRING" id="1148.gene:10497823"/>
<dbReference type="PaxDb" id="1148-1652038"/>
<dbReference type="EnsemblBacteria" id="BAA16963">
    <property type="protein sequence ID" value="BAA16963"/>
    <property type="gene ID" value="BAA16963"/>
</dbReference>
<dbReference type="KEGG" id="syn:slr0682"/>
<dbReference type="eggNOG" id="COG0141">
    <property type="taxonomic scope" value="Bacteria"/>
</dbReference>
<dbReference type="InParanoid" id="P72946"/>
<dbReference type="PhylomeDB" id="P72946"/>
<dbReference type="Proteomes" id="UP000001425">
    <property type="component" value="Chromosome"/>
</dbReference>
<dbReference type="GO" id="GO:0005737">
    <property type="term" value="C:cytoplasm"/>
    <property type="evidence" value="ECO:0000318"/>
    <property type="project" value="GO_Central"/>
</dbReference>
<dbReference type="GO" id="GO:0005829">
    <property type="term" value="C:cytosol"/>
    <property type="evidence" value="ECO:0000318"/>
    <property type="project" value="GO_Central"/>
</dbReference>
<dbReference type="GO" id="GO:0004399">
    <property type="term" value="F:histidinol dehydrogenase activity"/>
    <property type="evidence" value="ECO:0000318"/>
    <property type="project" value="GO_Central"/>
</dbReference>
<dbReference type="GO" id="GO:0046872">
    <property type="term" value="F:metal ion binding"/>
    <property type="evidence" value="ECO:0007669"/>
    <property type="project" value="InterPro"/>
</dbReference>
<dbReference type="GO" id="GO:0051287">
    <property type="term" value="F:NAD binding"/>
    <property type="evidence" value="ECO:0007669"/>
    <property type="project" value="InterPro"/>
</dbReference>
<dbReference type="GO" id="GO:0000105">
    <property type="term" value="P:L-histidine biosynthetic process"/>
    <property type="evidence" value="ECO:0000318"/>
    <property type="project" value="GO_Central"/>
</dbReference>
<dbReference type="Gene3D" id="1.20.5.1300">
    <property type="match status" value="1"/>
</dbReference>
<dbReference type="Gene3D" id="3.40.50.1980">
    <property type="entry name" value="Nitrogenase molybdenum iron protein domain"/>
    <property type="match status" value="2"/>
</dbReference>
<dbReference type="InterPro" id="IPR016161">
    <property type="entry name" value="Ald_DH/histidinol_DH"/>
</dbReference>
<dbReference type="InterPro" id="IPR022695">
    <property type="entry name" value="Histidinol_DH_monofunct"/>
</dbReference>
<dbReference type="InterPro" id="IPR012131">
    <property type="entry name" value="Hstdl_DH"/>
</dbReference>
<dbReference type="PANTHER" id="PTHR21256:SF2">
    <property type="entry name" value="HISTIDINE BIOSYNTHESIS TRIFUNCTIONAL PROTEIN"/>
    <property type="match status" value="1"/>
</dbReference>
<dbReference type="PANTHER" id="PTHR21256">
    <property type="entry name" value="HISTIDINOL DEHYDROGENASE HDH"/>
    <property type="match status" value="1"/>
</dbReference>
<dbReference type="Pfam" id="PF00815">
    <property type="entry name" value="Histidinol_dh"/>
    <property type="match status" value="1"/>
</dbReference>
<dbReference type="PIRSF" id="PIRSF000099">
    <property type="entry name" value="Histidinol_dh"/>
    <property type="match status" value="1"/>
</dbReference>
<dbReference type="PRINTS" id="PR00083">
    <property type="entry name" value="HOLDHDRGNASE"/>
</dbReference>
<dbReference type="SUPFAM" id="SSF53720">
    <property type="entry name" value="ALDH-like"/>
    <property type="match status" value="1"/>
</dbReference>
<evidence type="ECO:0000305" key="1"/>
<sequence length="409" mass="45138">MLRLITQSGDIVQELRRLHHRPVPSPWPVMAQVVAAMEHWAAMDQDAPPRVSGAELDAAYQRISQEKLSVIRQACAALEQVYRPQLPKTQVSFPEDGTVRGQRFYPVRRAGFYLEAKRGDALGNLLRQGMLAKTVGVAERVLVTETISSTILVAAQEMGIEEIYLAAGVPAIAMLTWGAKNIAPVESITGAGCPRVMAAKQLVSGVVTIDQTLARTNLMVLADGEANGQWLALDLLAHAEQYPNASAVLLTDRLELGEEVIQSVNRYCREQEHSVHTEKALAHYGLVAIVEDLEACGSWINEFCPHILLLAMEDPWTMVEKVQRAREIYIGHRSPSILGHYLSGANRLQTQDGAMATASELAFHCFLRSSQLLDYGNNPPPPWLKDLVNWQGLTAIEERLGQLGRLKES</sequence>
<accession>P72946</accession>
<reference key="1">
    <citation type="journal article" date="1996" name="DNA Res.">
        <title>Sequence analysis of the genome of the unicellular cyanobacterium Synechocystis sp. strain PCC6803. II. Sequence determination of the entire genome and assignment of potential protein-coding regions.</title>
        <authorList>
            <person name="Kaneko T."/>
            <person name="Sato S."/>
            <person name="Kotani H."/>
            <person name="Tanaka A."/>
            <person name="Asamizu E."/>
            <person name="Nakamura Y."/>
            <person name="Miyajima N."/>
            <person name="Hirosawa M."/>
            <person name="Sugiura M."/>
            <person name="Sasamoto S."/>
            <person name="Kimura T."/>
            <person name="Hosouchi T."/>
            <person name="Matsuno A."/>
            <person name="Muraki A."/>
            <person name="Nakazaki N."/>
            <person name="Naruo K."/>
            <person name="Okumura S."/>
            <person name="Shimpo S."/>
            <person name="Takeuchi C."/>
            <person name="Wada T."/>
            <person name="Watanabe A."/>
            <person name="Yamada M."/>
            <person name="Yasuda M."/>
            <person name="Tabata S."/>
        </authorList>
    </citation>
    <scope>NUCLEOTIDE SEQUENCE [LARGE SCALE GENOMIC DNA]</scope>
    <source>
        <strain>ATCC 27184 / PCC 6803 / Kazusa</strain>
    </source>
</reference>
<protein>
    <recommendedName>
        <fullName evidence="1">Histidinol dehydrogenase homolog</fullName>
        <ecNumber evidence="1">1.1.-.-</ecNumber>
    </recommendedName>
</protein>
<comment type="similarity">
    <text evidence="1">Belongs to the histidinol dehydrogenase family.</text>
</comment>
<comment type="caution">
    <text evidence="1">Could lack activity as the potential active sites and zinc-binding sites are missing.</text>
</comment>
<proteinExistence type="inferred from homology"/>
<keyword id="KW-0560">Oxidoreductase</keyword>
<keyword id="KW-1185">Reference proteome</keyword>
<name>HISXH_SYNY3</name>
<gene>
    <name type="ordered locus">slr0682</name>
</gene>
<organism>
    <name type="scientific">Synechocystis sp. (strain ATCC 27184 / PCC 6803 / Kazusa)</name>
    <dbReference type="NCBI Taxonomy" id="1111708"/>
    <lineage>
        <taxon>Bacteria</taxon>
        <taxon>Bacillati</taxon>
        <taxon>Cyanobacteriota</taxon>
        <taxon>Cyanophyceae</taxon>
        <taxon>Synechococcales</taxon>
        <taxon>Merismopediaceae</taxon>
        <taxon>Synechocystis</taxon>
    </lineage>
</organism>